<evidence type="ECO:0000250" key="1"/>
<evidence type="ECO:0000255" key="2"/>
<evidence type="ECO:0000305" key="3"/>
<reference key="1">
    <citation type="journal article" date="2000" name="Nature">
        <title>Sequence and analysis of chromosome 1 of the plant Arabidopsis thaliana.</title>
        <authorList>
            <person name="Theologis A."/>
            <person name="Ecker J.R."/>
            <person name="Palm C.J."/>
            <person name="Federspiel N.A."/>
            <person name="Kaul S."/>
            <person name="White O."/>
            <person name="Alonso J."/>
            <person name="Altafi H."/>
            <person name="Araujo R."/>
            <person name="Bowman C.L."/>
            <person name="Brooks S.Y."/>
            <person name="Buehler E."/>
            <person name="Chan A."/>
            <person name="Chao Q."/>
            <person name="Chen H."/>
            <person name="Cheuk R.F."/>
            <person name="Chin C.W."/>
            <person name="Chung M.K."/>
            <person name="Conn L."/>
            <person name="Conway A.B."/>
            <person name="Conway A.R."/>
            <person name="Creasy T.H."/>
            <person name="Dewar K."/>
            <person name="Dunn P."/>
            <person name="Etgu P."/>
            <person name="Feldblyum T.V."/>
            <person name="Feng J.-D."/>
            <person name="Fong B."/>
            <person name="Fujii C.Y."/>
            <person name="Gill J.E."/>
            <person name="Goldsmith A.D."/>
            <person name="Haas B."/>
            <person name="Hansen N.F."/>
            <person name="Hughes B."/>
            <person name="Huizar L."/>
            <person name="Hunter J.L."/>
            <person name="Jenkins J."/>
            <person name="Johnson-Hopson C."/>
            <person name="Khan S."/>
            <person name="Khaykin E."/>
            <person name="Kim C.J."/>
            <person name="Koo H.L."/>
            <person name="Kremenetskaia I."/>
            <person name="Kurtz D.B."/>
            <person name="Kwan A."/>
            <person name="Lam B."/>
            <person name="Langin-Hooper S."/>
            <person name="Lee A."/>
            <person name="Lee J.M."/>
            <person name="Lenz C.A."/>
            <person name="Li J.H."/>
            <person name="Li Y.-P."/>
            <person name="Lin X."/>
            <person name="Liu S.X."/>
            <person name="Liu Z.A."/>
            <person name="Luros J.S."/>
            <person name="Maiti R."/>
            <person name="Marziali A."/>
            <person name="Militscher J."/>
            <person name="Miranda M."/>
            <person name="Nguyen M."/>
            <person name="Nierman W.C."/>
            <person name="Osborne B.I."/>
            <person name="Pai G."/>
            <person name="Peterson J."/>
            <person name="Pham P.K."/>
            <person name="Rizzo M."/>
            <person name="Rooney T."/>
            <person name="Rowley D."/>
            <person name="Sakano H."/>
            <person name="Salzberg S.L."/>
            <person name="Schwartz J.R."/>
            <person name="Shinn P."/>
            <person name="Southwick A.M."/>
            <person name="Sun H."/>
            <person name="Tallon L.J."/>
            <person name="Tambunga G."/>
            <person name="Toriumi M.J."/>
            <person name="Town C.D."/>
            <person name="Utterback T."/>
            <person name="Van Aken S."/>
            <person name="Vaysberg M."/>
            <person name="Vysotskaia V.S."/>
            <person name="Walker M."/>
            <person name="Wu D."/>
            <person name="Yu G."/>
            <person name="Fraser C.M."/>
            <person name="Venter J.C."/>
            <person name="Davis R.W."/>
        </authorList>
    </citation>
    <scope>NUCLEOTIDE SEQUENCE [LARGE SCALE GENOMIC DNA]</scope>
    <source>
        <strain>cv. Columbia</strain>
    </source>
</reference>
<reference key="2">
    <citation type="journal article" date="2017" name="Plant J.">
        <title>Araport11: a complete reannotation of the Arabidopsis thaliana reference genome.</title>
        <authorList>
            <person name="Cheng C.Y."/>
            <person name="Krishnakumar V."/>
            <person name="Chan A.P."/>
            <person name="Thibaud-Nissen F."/>
            <person name="Schobel S."/>
            <person name="Town C.D."/>
        </authorList>
    </citation>
    <scope>GENOME REANNOTATION</scope>
    <source>
        <strain>cv. Columbia</strain>
    </source>
</reference>
<reference key="3">
    <citation type="submission" date="2006-03" db="EMBL/GenBank/DDBJ databases">
        <title>Arabidopsis ORF clones.</title>
        <authorList>
            <person name="Shinn P."/>
            <person name="Chen H."/>
            <person name="Kim C.J."/>
            <person name="Ecker J.R."/>
        </authorList>
    </citation>
    <scope>NUCLEOTIDE SEQUENCE [LARGE SCALE MRNA]</scope>
    <source>
        <strain>cv. Columbia</strain>
    </source>
</reference>
<accession>Q9LNK7</accession>
<sequence>MASLSGSWRDAYKGMSSDNIKGLVLALSSSLFIGASFIVKKKGLKRAGASGLRAGSGGYSYLLEPLWWVGMITMIVGEIANFAAYAFAPAILVTPLGALSIIISAALAHVILHEKLHTFGLLGCVLCVVGSITIVLHAPQEQEIDSVLQVWNLATEPAFLLYAAAVVGAAIILIVQFVPQYGQSHVMVYIGVCSLVGSLSVMSVKALGIALKLTFSGMNQLIYPQTWVFTLIVLTCVITQMNYLNKALDTFNTAVVSPIYYVMFTSLTILASVIMFKDWDRQDGTQIVTELCGFVTILSGTFLLHKTKDMVDGSSSLGNLALRLPKQLEDSNGFEQEGIPLTLRRHECTKSPRPMRQFILPQDGPEAV</sequence>
<organism>
    <name type="scientific">Arabidopsis thaliana</name>
    <name type="common">Mouse-ear cress</name>
    <dbReference type="NCBI Taxonomy" id="3702"/>
    <lineage>
        <taxon>Eukaryota</taxon>
        <taxon>Viridiplantae</taxon>
        <taxon>Streptophyta</taxon>
        <taxon>Embryophyta</taxon>
        <taxon>Tracheophyta</taxon>
        <taxon>Spermatophyta</taxon>
        <taxon>Magnoliopsida</taxon>
        <taxon>eudicotyledons</taxon>
        <taxon>Gunneridae</taxon>
        <taxon>Pentapetalae</taxon>
        <taxon>rosids</taxon>
        <taxon>malvids</taxon>
        <taxon>Brassicales</taxon>
        <taxon>Brassicaceae</taxon>
        <taxon>Camelineae</taxon>
        <taxon>Arabidopsis</taxon>
    </lineage>
</organism>
<feature type="chain" id="PRO_0000430291" description="Probable magnesium transporter NIPA3">
    <location>
        <begin position="1"/>
        <end position="368"/>
    </location>
</feature>
<feature type="topological domain" description="Extracellular" evidence="2">
    <location>
        <begin position="1"/>
        <end position="18"/>
    </location>
</feature>
<feature type="transmembrane region" description="Helical; Name=1" evidence="2">
    <location>
        <begin position="19"/>
        <end position="39"/>
    </location>
</feature>
<feature type="topological domain" description="Cytoplasmic" evidence="2">
    <location>
        <begin position="40"/>
        <end position="66"/>
    </location>
</feature>
<feature type="transmembrane region" description="Helical; Name=2" evidence="2">
    <location>
        <begin position="67"/>
        <end position="87"/>
    </location>
</feature>
<feature type="topological domain" description="Extracellular" evidence="2">
    <location>
        <begin position="88"/>
        <end position="90"/>
    </location>
</feature>
<feature type="transmembrane region" description="Helical; Name=3" evidence="2">
    <location>
        <begin position="91"/>
        <end position="111"/>
    </location>
</feature>
<feature type="topological domain" description="Cytoplasmic" evidence="2">
    <location>
        <begin position="112"/>
        <end position="115"/>
    </location>
</feature>
<feature type="transmembrane region" description="Helical; Name=4" evidence="2">
    <location>
        <begin position="116"/>
        <end position="136"/>
    </location>
</feature>
<feature type="topological domain" description="Extracellular" evidence="2">
    <location>
        <begin position="137"/>
        <end position="157"/>
    </location>
</feature>
<feature type="transmembrane region" description="Helical; Name=5" evidence="2">
    <location>
        <begin position="158"/>
        <end position="178"/>
    </location>
</feature>
<feature type="topological domain" description="Cytoplasmic" evidence="2">
    <location>
        <begin position="179"/>
        <end position="189"/>
    </location>
</feature>
<feature type="transmembrane region" description="Helical; Name=6" evidence="2">
    <location>
        <begin position="190"/>
        <end position="210"/>
    </location>
</feature>
<feature type="topological domain" description="Extracellular" evidence="2">
    <location>
        <begin position="211"/>
        <end position="220"/>
    </location>
</feature>
<feature type="transmembrane region" description="Helical; Name=7" evidence="2">
    <location>
        <begin position="221"/>
        <end position="241"/>
    </location>
</feature>
<feature type="topological domain" description="Cytoplasmic" evidence="2">
    <location>
        <begin position="242"/>
        <end position="255"/>
    </location>
</feature>
<feature type="transmembrane region" description="Helical; Name=8" evidence="2">
    <location>
        <begin position="256"/>
        <end position="276"/>
    </location>
</feature>
<feature type="topological domain" description="Extracellular" evidence="2">
    <location>
        <begin position="277"/>
        <end position="283"/>
    </location>
</feature>
<feature type="transmembrane region" description="Helical; Name=9" evidence="2">
    <location>
        <begin position="284"/>
        <end position="304"/>
    </location>
</feature>
<feature type="topological domain" description="Cytoplasmic" evidence="2">
    <location>
        <begin position="305"/>
        <end position="368"/>
    </location>
</feature>
<name>NIPA3_ARATH</name>
<protein>
    <recommendedName>
        <fullName>Probable magnesium transporter NIPA3</fullName>
    </recommendedName>
</protein>
<dbReference type="EMBL" id="AC023279">
    <property type="protein sequence ID" value="AAF79266.1"/>
    <property type="molecule type" value="Genomic_DNA"/>
</dbReference>
<dbReference type="EMBL" id="AC023913">
    <property type="protein sequence ID" value="AAG51905.1"/>
    <property type="molecule type" value="Genomic_DNA"/>
</dbReference>
<dbReference type="EMBL" id="CP002684">
    <property type="protein sequence ID" value="AEE31717.1"/>
    <property type="molecule type" value="Genomic_DNA"/>
</dbReference>
<dbReference type="EMBL" id="BT024742">
    <property type="protein sequence ID" value="ABD59080.1"/>
    <property type="molecule type" value="mRNA"/>
</dbReference>
<dbReference type="RefSeq" id="NP_564447.1">
    <property type="nucleotide sequence ID" value="NM_103169.3"/>
</dbReference>
<dbReference type="BioGRID" id="25581">
    <property type="interactions" value="32"/>
</dbReference>
<dbReference type="FunCoup" id="Q9LNK7">
    <property type="interactions" value="4068"/>
</dbReference>
<dbReference type="IntAct" id="Q9LNK7">
    <property type="interactions" value="31"/>
</dbReference>
<dbReference type="iPTMnet" id="Q9LNK7"/>
<dbReference type="PaxDb" id="3702-AT1G34470.1"/>
<dbReference type="ProteomicsDB" id="251113"/>
<dbReference type="EnsemblPlants" id="AT1G34470.1">
    <property type="protein sequence ID" value="AT1G34470.1"/>
    <property type="gene ID" value="AT1G34470"/>
</dbReference>
<dbReference type="GeneID" id="840349"/>
<dbReference type="Gramene" id="AT1G34470.1">
    <property type="protein sequence ID" value="AT1G34470.1"/>
    <property type="gene ID" value="AT1G34470"/>
</dbReference>
<dbReference type="KEGG" id="ath:AT1G34470"/>
<dbReference type="Araport" id="AT1G34470"/>
<dbReference type="TAIR" id="AT1G34470">
    <property type="gene designation" value="ENOR3L5"/>
</dbReference>
<dbReference type="eggNOG" id="KOG2922">
    <property type="taxonomic scope" value="Eukaryota"/>
</dbReference>
<dbReference type="HOGENOM" id="CLU_012349_1_1_1"/>
<dbReference type="InParanoid" id="Q9LNK7"/>
<dbReference type="OMA" id="WDRQDGT"/>
<dbReference type="OrthoDB" id="6428174at2759"/>
<dbReference type="PhylomeDB" id="Q9LNK7"/>
<dbReference type="PRO" id="PR:Q9LNK7"/>
<dbReference type="Proteomes" id="UP000006548">
    <property type="component" value="Chromosome 1"/>
</dbReference>
<dbReference type="ExpressionAtlas" id="Q9LNK7">
    <property type="expression patterns" value="baseline and differential"/>
</dbReference>
<dbReference type="GO" id="GO:0005769">
    <property type="term" value="C:early endosome"/>
    <property type="evidence" value="ECO:0000250"/>
    <property type="project" value="UniProtKB"/>
</dbReference>
<dbReference type="GO" id="GO:0005886">
    <property type="term" value="C:plasma membrane"/>
    <property type="evidence" value="ECO:0000250"/>
    <property type="project" value="UniProtKB"/>
</dbReference>
<dbReference type="GO" id="GO:0015095">
    <property type="term" value="F:magnesium ion transmembrane transporter activity"/>
    <property type="evidence" value="ECO:0007669"/>
    <property type="project" value="InterPro"/>
</dbReference>
<dbReference type="GO" id="GO:0015693">
    <property type="term" value="P:magnesium ion transport"/>
    <property type="evidence" value="ECO:0000250"/>
    <property type="project" value="UniProtKB"/>
</dbReference>
<dbReference type="InterPro" id="IPR008521">
    <property type="entry name" value="Mg_trans_NIPA"/>
</dbReference>
<dbReference type="PANTHER" id="PTHR12570">
    <property type="match status" value="1"/>
</dbReference>
<dbReference type="PANTHER" id="PTHR12570:SF89">
    <property type="entry name" value="MAGNESIUM TRANSPORTER NIPA3-RELATED"/>
    <property type="match status" value="1"/>
</dbReference>
<dbReference type="Pfam" id="PF05653">
    <property type="entry name" value="Mg_trans_NIPA"/>
    <property type="match status" value="1"/>
</dbReference>
<dbReference type="SUPFAM" id="SSF103481">
    <property type="entry name" value="Multidrug resistance efflux transporter EmrE"/>
    <property type="match status" value="1"/>
</dbReference>
<proteinExistence type="evidence at transcript level"/>
<gene>
    <name type="ordered locus">At1g34470</name>
    <name type="ORF">F12K21.21</name>
    <name type="ORF">F7P12.17</name>
</gene>
<keyword id="KW-1003">Cell membrane</keyword>
<keyword id="KW-0967">Endosome</keyword>
<keyword id="KW-0406">Ion transport</keyword>
<keyword id="KW-0460">Magnesium</keyword>
<keyword id="KW-0472">Membrane</keyword>
<keyword id="KW-1185">Reference proteome</keyword>
<keyword id="KW-0812">Transmembrane</keyword>
<keyword id="KW-1133">Transmembrane helix</keyword>
<keyword id="KW-0813">Transport</keyword>
<comment type="function">
    <text evidence="1">Acts as a Mg(2+) transporter. Can also transport other divalent cations such as Fe(2+), Sr(2+), Ba(2+), Mn(2+) and Co(2+) but to a much less extent than Mg(2+) (By similarity).</text>
</comment>
<comment type="subunit">
    <text evidence="1">Homodimer.</text>
</comment>
<comment type="subcellular location">
    <subcellularLocation>
        <location evidence="1">Cell membrane</location>
        <topology evidence="1">Multi-pass membrane protein</topology>
    </subcellularLocation>
    <subcellularLocation>
        <location evidence="1">Early endosome</location>
    </subcellularLocation>
    <text evidence="1">Recruited to the cell membrane in response to low extracellular magnesium.</text>
</comment>
<comment type="similarity">
    <text evidence="3">Belongs to the NIPA (TC 2.A.7) family.</text>
</comment>